<proteinExistence type="evidence at protein level"/>
<sequence>MEFYESAYFIVLIPSIVITVIFLFFWLFMKETLYDEVLAKQKREQKLIPTKTDKKKAEKKKNKKKEIQNGNLHESDSESVPRDFKLSDALAVEDDQVAPVPLNVVETSSSVRERKKKEKKQKPVLEEQVIKESDASKIPGKKVEPVPVTKQPTPPSEAAASKKKPGQKKSKNGSDDQDKKVETLMVPSKRQEALPLHQETKQESGSGKKKASSKKQKTENVFVDEPLIHATTYIPLMDNADSSPVVDKREVIDLLKPDQVEGIQKSGTKKLKTETDKENAEVKFKDFLLSLKTMMFSEDEALCVVDLLKEKSGVIQDALKKSSKGELTTLIHQLQEKDKLLAAVKEDAAATKDRCKQLTQEMMTEKERSNVVITRMKDRIGTLEKEHNVFQNKIHVSYQETQQMQMKFQQVREQMEAEIAHLKQENGILRDAVSNTTNQLESKQSAELNKLRQDYARLVNELTEKTGKLQQEEVQKKNAEQAATQLKVQLQEAERRWEEVQSYIRKRTAEHEAAQQDLQSKFVAKENEVQSLHSKLTDTLVSKQQLEQRLMQLMESEQKRVNKEESLQMQVQDILEQNEALKAQIQQFHSQIAAQTSASVLAEELHKVIAEKDKQIKQTEDSLASERDRLTSKEEELKDIQNMNFLLKAEVQKLQALANEQAAAAHELEKMQQSVYVKDDKIRLLEEQLQHEISNKMEEFKILNDQNKALKSEVQKLQTLVSEQPNKDVVEQMEKCIQEKDEKLKTVEELLETGLIQVATKEEELNAIRTENSSLTKEVQDLKAKQNDQVSFASLVEELKKVIHEKDGKIKSVEELLEAELLKVANKEKTVQDLKQEIKALKEEIGNVQLEKAQQLSITSKVQELQNLLKGKEEQMNTMKAVLEEKEKDLANTGKWLQDLQEENESLKAHVQEVAQHNLKEASSASQFEELEIVLKEKENELKRLEAMLKERESDLSSKTQLLQDVQDENKLFKSQIEQLKQQNYQQASSFPPHEELLKVISEREKEISGLWNELDSLKDAVEHQRKKNNDLREKNWEAMEALASTEKMLQDKVNKTSKERQQQVEAVELEAKEVLKKLFPKVSVPSNLSYGEWLHGFEKKAKECMAGTSGSEEVKVLEHKLKEADEMHTLLQLECEKYKSVLAETEGILQKLQRSVEQEENKWKVKVDESHKTIKQMQSSFTSSEQELERLRSENKDIENLRREREHLEMELEKAEMERSTYVTEVRELKDLLTELQKKLDDSYSEAVRQNEELNLLKAQLNETLTKLRTEQNERQKVAGDLHKAQQSLELIQSKIVKAAGDTTVIENSDVSPETESSEKETMSVSLNQTVTQLQQLLQAVNQQLTKEKEHYQVLE</sequence>
<keyword id="KW-0025">Alternative splicing</keyword>
<keyword id="KW-0175">Coiled coil</keyword>
<keyword id="KW-0903">Direct protein sequencing</keyword>
<keyword id="KW-0256">Endoplasmic reticulum</keyword>
<keyword id="KW-0325">Glycoprotein</keyword>
<keyword id="KW-0472">Membrane</keyword>
<keyword id="KW-0597">Phosphoprotein</keyword>
<keyword id="KW-1267">Proteomics identification</keyword>
<keyword id="KW-1185">Reference proteome</keyword>
<keyword id="KW-0735">Signal-anchor</keyword>
<keyword id="KW-0812">Transmembrane</keyword>
<keyword id="KW-1133">Transmembrane helix</keyword>
<gene>
    <name type="primary">KTN1</name>
    <name type="synonym">CG1</name>
    <name type="synonym">KIAA0004</name>
</gene>
<organism>
    <name type="scientific">Homo sapiens</name>
    <name type="common">Human</name>
    <dbReference type="NCBI Taxonomy" id="9606"/>
    <lineage>
        <taxon>Eukaryota</taxon>
        <taxon>Metazoa</taxon>
        <taxon>Chordata</taxon>
        <taxon>Craniata</taxon>
        <taxon>Vertebrata</taxon>
        <taxon>Euteleostomi</taxon>
        <taxon>Mammalia</taxon>
        <taxon>Eutheria</taxon>
        <taxon>Euarchontoglires</taxon>
        <taxon>Primates</taxon>
        <taxon>Haplorrhini</taxon>
        <taxon>Catarrhini</taxon>
        <taxon>Hominidae</taxon>
        <taxon>Homo</taxon>
    </lineage>
</organism>
<evidence type="ECO:0000250" key="1"/>
<evidence type="ECO:0000255" key="2"/>
<evidence type="ECO:0000256" key="3">
    <source>
        <dbReference type="SAM" id="MobiDB-lite"/>
    </source>
</evidence>
<evidence type="ECO:0000269" key="4">
    <source>
    </source>
</evidence>
<evidence type="ECO:0000269" key="5">
    <source>
    </source>
</evidence>
<evidence type="ECO:0000269" key="6">
    <source>
    </source>
</evidence>
<evidence type="ECO:0000303" key="7">
    <source>
    </source>
</evidence>
<evidence type="ECO:0000303" key="8">
    <source>
    </source>
</evidence>
<evidence type="ECO:0000303" key="9">
    <source>
    </source>
</evidence>
<evidence type="ECO:0000303" key="10">
    <source>
    </source>
</evidence>
<evidence type="ECO:0000305" key="11"/>
<evidence type="ECO:0007744" key="12">
    <source>
    </source>
</evidence>
<evidence type="ECO:0007744" key="13">
    <source>
    </source>
</evidence>
<evidence type="ECO:0007744" key="14">
    <source>
    </source>
</evidence>
<evidence type="ECO:0007744" key="15">
    <source>
    </source>
</evidence>
<evidence type="ECO:0007744" key="16">
    <source>
    </source>
</evidence>
<evidence type="ECO:0007744" key="17">
    <source>
    </source>
</evidence>
<reference key="1">
    <citation type="journal article" date="1995" name="Mol. Biol. Cell">
        <title>Molecular cloning and characterization of human kinectin.</title>
        <authorList>
            <person name="Fuetterer A."/>
            <person name="Kruppa G."/>
            <person name="Kraemer B."/>
            <person name="Lemke H."/>
            <person name="Kroenke M."/>
        </authorList>
    </citation>
    <scope>NUCLEOTIDE SEQUENCE [MRNA] (ISOFORM 1)</scope>
    <source>
        <tissue>Lymphoid tissue</tissue>
    </source>
</reference>
<reference key="2">
    <citation type="journal article" date="1994" name="Gene">
        <title>Cloning of a gene encoding a human leukocyte protein characterised by extensive heptad repeats.</title>
        <authorList>
            <person name="Print C.G."/>
            <person name="Leung E."/>
            <person name="Harrison J.E.B."/>
            <person name="Watson J.D."/>
            <person name="Krissansen G.W."/>
        </authorList>
    </citation>
    <scope>NUCLEOTIDE SEQUENCE [MRNA] (ISOFORM 2)</scope>
    <source>
        <tissue>Peripheral blood lymphocyte</tissue>
    </source>
</reference>
<reference key="3">
    <citation type="submission" date="2003-03" db="EMBL/GenBank/DDBJ databases">
        <title>Identification of a variant of Homo sapiens kinectin mRNA.</title>
        <authorList>
            <person name="Wang H.-C."/>
            <person name="Chen W.-F."/>
            <person name="Su Y.-R."/>
        </authorList>
    </citation>
    <scope>NUCLEOTIDE SEQUENCE [MRNA] (ISOFORM 1)</scope>
</reference>
<reference key="4">
    <citation type="journal article" date="1994" name="DNA Res.">
        <title>Prediction of the coding sequences of unidentified human genes. I. The coding sequences of 40 new genes (KIAA0001-KIAA0040) deduced by analysis of randomly sampled cDNA clones from human immature myeloid cell line KG-1.</title>
        <authorList>
            <person name="Nomura N."/>
            <person name="Miyajima N."/>
            <person name="Sazuka T."/>
            <person name="Tanaka A."/>
            <person name="Kawarabayasi Y."/>
            <person name="Sato S."/>
            <person name="Nagase T."/>
            <person name="Seki N."/>
            <person name="Ishikawa K."/>
            <person name="Tabata S."/>
        </authorList>
    </citation>
    <scope>NUCLEOTIDE SEQUENCE [LARGE SCALE MRNA] (ISOFORM 2)</scope>
    <source>
        <tissue>Bone marrow</tissue>
    </source>
</reference>
<reference key="5">
    <citation type="journal article" date="2004" name="Nat. Genet.">
        <title>Complete sequencing and characterization of 21,243 full-length human cDNAs.</title>
        <authorList>
            <person name="Ota T."/>
            <person name="Suzuki Y."/>
            <person name="Nishikawa T."/>
            <person name="Otsuki T."/>
            <person name="Sugiyama T."/>
            <person name="Irie R."/>
            <person name="Wakamatsu A."/>
            <person name="Hayashi K."/>
            <person name="Sato H."/>
            <person name="Nagai K."/>
            <person name="Kimura K."/>
            <person name="Makita H."/>
            <person name="Sekine M."/>
            <person name="Obayashi M."/>
            <person name="Nishi T."/>
            <person name="Shibahara T."/>
            <person name="Tanaka T."/>
            <person name="Ishii S."/>
            <person name="Yamamoto J."/>
            <person name="Saito K."/>
            <person name="Kawai Y."/>
            <person name="Isono Y."/>
            <person name="Nakamura Y."/>
            <person name="Nagahari K."/>
            <person name="Murakami K."/>
            <person name="Yasuda T."/>
            <person name="Iwayanagi T."/>
            <person name="Wagatsuma M."/>
            <person name="Shiratori A."/>
            <person name="Sudo H."/>
            <person name="Hosoiri T."/>
            <person name="Kaku Y."/>
            <person name="Kodaira H."/>
            <person name="Kondo H."/>
            <person name="Sugawara M."/>
            <person name="Takahashi M."/>
            <person name="Kanda K."/>
            <person name="Yokoi T."/>
            <person name="Furuya T."/>
            <person name="Kikkawa E."/>
            <person name="Omura Y."/>
            <person name="Abe K."/>
            <person name="Kamihara K."/>
            <person name="Katsuta N."/>
            <person name="Sato K."/>
            <person name="Tanikawa M."/>
            <person name="Yamazaki M."/>
            <person name="Ninomiya K."/>
            <person name="Ishibashi T."/>
            <person name="Yamashita H."/>
            <person name="Murakawa K."/>
            <person name="Fujimori K."/>
            <person name="Tanai H."/>
            <person name="Kimata M."/>
            <person name="Watanabe M."/>
            <person name="Hiraoka S."/>
            <person name="Chiba Y."/>
            <person name="Ishida S."/>
            <person name="Ono Y."/>
            <person name="Takiguchi S."/>
            <person name="Watanabe S."/>
            <person name="Yosida M."/>
            <person name="Hotuta T."/>
            <person name="Kusano J."/>
            <person name="Kanehori K."/>
            <person name="Takahashi-Fujii A."/>
            <person name="Hara H."/>
            <person name="Tanase T.-O."/>
            <person name="Nomura Y."/>
            <person name="Togiya S."/>
            <person name="Komai F."/>
            <person name="Hara R."/>
            <person name="Takeuchi K."/>
            <person name="Arita M."/>
            <person name="Imose N."/>
            <person name="Musashino K."/>
            <person name="Yuuki H."/>
            <person name="Oshima A."/>
            <person name="Sasaki N."/>
            <person name="Aotsuka S."/>
            <person name="Yoshikawa Y."/>
            <person name="Matsunawa H."/>
            <person name="Ichihara T."/>
            <person name="Shiohata N."/>
            <person name="Sano S."/>
            <person name="Moriya S."/>
            <person name="Momiyama H."/>
            <person name="Satoh N."/>
            <person name="Takami S."/>
            <person name="Terashima Y."/>
            <person name="Suzuki O."/>
            <person name="Nakagawa S."/>
            <person name="Senoh A."/>
            <person name="Mizoguchi H."/>
            <person name="Goto Y."/>
            <person name="Shimizu F."/>
            <person name="Wakebe H."/>
            <person name="Hishigaki H."/>
            <person name="Watanabe T."/>
            <person name="Sugiyama A."/>
            <person name="Takemoto M."/>
            <person name="Kawakami B."/>
            <person name="Yamazaki M."/>
            <person name="Watanabe K."/>
            <person name="Kumagai A."/>
            <person name="Itakura S."/>
            <person name="Fukuzumi Y."/>
            <person name="Fujimori Y."/>
            <person name="Komiyama M."/>
            <person name="Tashiro H."/>
            <person name="Tanigami A."/>
            <person name="Fujiwara T."/>
            <person name="Ono T."/>
            <person name="Yamada K."/>
            <person name="Fujii Y."/>
            <person name="Ozaki K."/>
            <person name="Hirao M."/>
            <person name="Ohmori Y."/>
            <person name="Kawabata A."/>
            <person name="Hikiji T."/>
            <person name="Kobatake N."/>
            <person name="Inagaki H."/>
            <person name="Ikema Y."/>
            <person name="Okamoto S."/>
            <person name="Okitani R."/>
            <person name="Kawakami T."/>
            <person name="Noguchi S."/>
            <person name="Itoh T."/>
            <person name="Shigeta K."/>
            <person name="Senba T."/>
            <person name="Matsumura K."/>
            <person name="Nakajima Y."/>
            <person name="Mizuno T."/>
            <person name="Morinaga M."/>
            <person name="Sasaki M."/>
            <person name="Togashi T."/>
            <person name="Oyama M."/>
            <person name="Hata H."/>
            <person name="Watanabe M."/>
            <person name="Komatsu T."/>
            <person name="Mizushima-Sugano J."/>
            <person name="Satoh T."/>
            <person name="Shirai Y."/>
            <person name="Takahashi Y."/>
            <person name="Nakagawa K."/>
            <person name="Okumura K."/>
            <person name="Nagase T."/>
            <person name="Nomura N."/>
            <person name="Kikuchi H."/>
            <person name="Masuho Y."/>
            <person name="Yamashita R."/>
            <person name="Nakai K."/>
            <person name="Yada T."/>
            <person name="Nakamura Y."/>
            <person name="Ohara O."/>
            <person name="Isogai T."/>
            <person name="Sugano S."/>
        </authorList>
    </citation>
    <scope>NUCLEOTIDE SEQUENCE [LARGE SCALE MRNA] (ISOFORM 4)</scope>
    <source>
        <tissue>Testis</tissue>
    </source>
</reference>
<reference key="6">
    <citation type="journal article" date="2003" name="Nature">
        <title>The DNA sequence and analysis of human chromosome 14.</title>
        <authorList>
            <person name="Heilig R."/>
            <person name="Eckenberg R."/>
            <person name="Petit J.-L."/>
            <person name="Fonknechten N."/>
            <person name="Da Silva C."/>
            <person name="Cattolico L."/>
            <person name="Levy M."/>
            <person name="Barbe V."/>
            <person name="De Berardinis V."/>
            <person name="Ureta-Vidal A."/>
            <person name="Pelletier E."/>
            <person name="Vico V."/>
            <person name="Anthouard V."/>
            <person name="Rowen L."/>
            <person name="Madan A."/>
            <person name="Qin S."/>
            <person name="Sun H."/>
            <person name="Du H."/>
            <person name="Pepin K."/>
            <person name="Artiguenave F."/>
            <person name="Robert C."/>
            <person name="Cruaud C."/>
            <person name="Bruels T."/>
            <person name="Jaillon O."/>
            <person name="Friedlander L."/>
            <person name="Samson G."/>
            <person name="Brottier P."/>
            <person name="Cure S."/>
            <person name="Segurens B."/>
            <person name="Aniere F."/>
            <person name="Samain S."/>
            <person name="Crespeau H."/>
            <person name="Abbasi N."/>
            <person name="Aiach N."/>
            <person name="Boscus D."/>
            <person name="Dickhoff R."/>
            <person name="Dors M."/>
            <person name="Dubois I."/>
            <person name="Friedman C."/>
            <person name="Gouyvenoux M."/>
            <person name="James R."/>
            <person name="Madan A."/>
            <person name="Mairey-Estrada B."/>
            <person name="Mangenot S."/>
            <person name="Martins N."/>
            <person name="Menard M."/>
            <person name="Oztas S."/>
            <person name="Ratcliffe A."/>
            <person name="Shaffer T."/>
            <person name="Trask B."/>
            <person name="Vacherie B."/>
            <person name="Bellemere C."/>
            <person name="Belser C."/>
            <person name="Besnard-Gonnet M."/>
            <person name="Bartol-Mavel D."/>
            <person name="Boutard M."/>
            <person name="Briez-Silla S."/>
            <person name="Combette S."/>
            <person name="Dufosse-Laurent V."/>
            <person name="Ferron C."/>
            <person name="Lechaplais C."/>
            <person name="Louesse C."/>
            <person name="Muselet D."/>
            <person name="Magdelenat G."/>
            <person name="Pateau E."/>
            <person name="Petit E."/>
            <person name="Sirvain-Trukniewicz P."/>
            <person name="Trybou A."/>
            <person name="Vega-Czarny N."/>
            <person name="Bataille E."/>
            <person name="Bluet E."/>
            <person name="Bordelais I."/>
            <person name="Dubois M."/>
            <person name="Dumont C."/>
            <person name="Guerin T."/>
            <person name="Haffray S."/>
            <person name="Hammadi R."/>
            <person name="Muanga J."/>
            <person name="Pellouin V."/>
            <person name="Robert D."/>
            <person name="Wunderle E."/>
            <person name="Gauguet G."/>
            <person name="Roy A."/>
            <person name="Sainte-Marthe L."/>
            <person name="Verdier J."/>
            <person name="Verdier-Discala C."/>
            <person name="Hillier L.W."/>
            <person name="Fulton L."/>
            <person name="McPherson J."/>
            <person name="Matsuda F."/>
            <person name="Wilson R."/>
            <person name="Scarpelli C."/>
            <person name="Gyapay G."/>
            <person name="Wincker P."/>
            <person name="Saurin W."/>
            <person name="Quetier F."/>
            <person name="Waterston R."/>
            <person name="Hood L."/>
            <person name="Weissenbach J."/>
        </authorList>
    </citation>
    <scope>NUCLEOTIDE SEQUENCE [LARGE SCALE GENOMIC DNA]</scope>
</reference>
<reference key="7">
    <citation type="journal article" date="2004" name="Genome Res.">
        <title>The status, quality, and expansion of the NIH full-length cDNA project: the Mammalian Gene Collection (MGC).</title>
        <authorList>
            <consortium name="The MGC Project Team"/>
        </authorList>
    </citation>
    <scope>NUCLEOTIDE SEQUENCE [LARGE SCALE MRNA] (ISOFORMS 3 AND 4)</scope>
    <scope>NUCLEOTIDE SEQUENCE [LARGE SCALE MRNA] OF 1-870 (ISOFORMS 1/2)</scope>
    <source>
        <tissue>Cerebellum</tissue>
        <tissue>Lung</tissue>
    </source>
</reference>
<reference key="8">
    <citation type="journal article" date="2002" name="J. Cell Sci.">
        <title>Integrin clustering induces kinectin accumulation.</title>
        <authorList>
            <person name="Tran H."/>
            <person name="Pankov R."/>
            <person name="Tran S.D."/>
            <person name="Hampton B."/>
            <person name="Burgess W.H."/>
            <person name="Yamada K.M."/>
        </authorList>
    </citation>
    <scope>PROTEIN SEQUENCE OF 191-195; 395-405; 545-554; 747-761 AND 811-823</scope>
</reference>
<reference key="9">
    <citation type="submission" date="2004-01" db="EMBL/GenBank/DDBJ databases">
        <title>SEREX-defined rhabdomyosarcoma antigens.</title>
        <authorList>
            <person name="Behrends U."/>
            <person name="Gotz C."/>
            <person name="Mautner J."/>
        </authorList>
    </citation>
    <scope>NUCLEOTIDE SEQUENCE [MRNA] OF 538-1357</scope>
    <source>
        <tissue>Embryonic rhabdomyosarcoma</tissue>
    </source>
</reference>
<reference key="10">
    <citation type="journal article" date="1996" name="Immunogenetics">
        <title>The CG-1 gene, a member of the kinectin and ES/130 family, maps to human chromosome band 14q22.</title>
        <authorList>
            <person name="Print C.G."/>
            <person name="Morris C.M."/>
            <person name="Spurr N.K."/>
            <person name="Rooke L."/>
            <person name="Krissansen G.W."/>
        </authorList>
    </citation>
    <scope>CHROMOSOMAL LOCATION</scope>
</reference>
<reference key="11">
    <citation type="journal article" date="2006" name="Cell">
        <title>Global, in vivo, and site-specific phosphorylation dynamics in signaling networks.</title>
        <authorList>
            <person name="Olsen J.V."/>
            <person name="Blagoev B."/>
            <person name="Gnad F."/>
            <person name="Macek B."/>
            <person name="Kumar C."/>
            <person name="Mortensen P."/>
            <person name="Mann M."/>
        </authorList>
    </citation>
    <scope>PHOSPHORYLATION [LARGE SCALE ANALYSIS] AT THR-153</scope>
    <scope>IDENTIFICATION BY MASS SPECTROMETRY [LARGE SCALE ANALYSIS]</scope>
    <source>
        <tissue>Cervix carcinoma</tissue>
    </source>
</reference>
<reference key="12">
    <citation type="journal article" date="2008" name="Proc. Natl. Acad. Sci. U.S.A.">
        <title>A quantitative atlas of mitotic phosphorylation.</title>
        <authorList>
            <person name="Dephoure N."/>
            <person name="Zhou C."/>
            <person name="Villen J."/>
            <person name="Beausoleil S.A."/>
            <person name="Bakalarski C.E."/>
            <person name="Elledge S.J."/>
            <person name="Gygi S.P."/>
        </authorList>
    </citation>
    <scope>PHOSPHORYLATION [LARGE SCALE ANALYSIS] AT SER-75; THR-153 AND SER-156</scope>
    <scope>IDENTIFICATION BY MASS SPECTROMETRY [LARGE SCALE ANALYSIS]</scope>
    <source>
        <tissue>Cervix carcinoma</tissue>
    </source>
</reference>
<reference key="13">
    <citation type="journal article" date="2009" name="Anal. Chem.">
        <title>Lys-N and trypsin cover complementary parts of the phosphoproteome in a refined SCX-based approach.</title>
        <authorList>
            <person name="Gauci S."/>
            <person name="Helbig A.O."/>
            <person name="Slijper M."/>
            <person name="Krijgsveld J."/>
            <person name="Heck A.J."/>
            <person name="Mohammed S."/>
        </authorList>
    </citation>
    <scope>IDENTIFICATION BY MASS SPECTROMETRY [LARGE SCALE ANALYSIS]</scope>
</reference>
<reference key="14">
    <citation type="journal article" date="2010" name="Sci. Signal.">
        <title>Quantitative phosphoproteomics reveals widespread full phosphorylation site occupancy during mitosis.</title>
        <authorList>
            <person name="Olsen J.V."/>
            <person name="Vermeulen M."/>
            <person name="Santamaria A."/>
            <person name="Kumar C."/>
            <person name="Miller M.L."/>
            <person name="Jensen L.J."/>
            <person name="Gnad F."/>
            <person name="Cox J."/>
            <person name="Jensen T.S."/>
            <person name="Nigg E.A."/>
            <person name="Brunak S."/>
            <person name="Mann M."/>
        </authorList>
    </citation>
    <scope>PHOSPHORYLATION [LARGE SCALE ANALYSIS] AT SER-75 AND THR-153</scope>
    <scope>IDENTIFICATION BY MASS SPECTROMETRY [LARGE SCALE ANALYSIS]</scope>
    <source>
        <tissue>Cervix carcinoma</tissue>
    </source>
</reference>
<reference key="15">
    <citation type="journal article" date="2011" name="BMC Syst. Biol.">
        <title>Initial characterization of the human central proteome.</title>
        <authorList>
            <person name="Burkard T.R."/>
            <person name="Planyavsky M."/>
            <person name="Kaupe I."/>
            <person name="Breitwieser F.P."/>
            <person name="Buerckstuemmer T."/>
            <person name="Bennett K.L."/>
            <person name="Superti-Furga G."/>
            <person name="Colinge J."/>
        </authorList>
    </citation>
    <scope>IDENTIFICATION BY MASS SPECTROMETRY [LARGE SCALE ANALYSIS]</scope>
</reference>
<reference key="16">
    <citation type="journal article" date="2011" name="Sci. Signal.">
        <title>System-wide temporal characterization of the proteome and phosphoproteome of human embryonic stem cell differentiation.</title>
        <authorList>
            <person name="Rigbolt K.T."/>
            <person name="Prokhorova T.A."/>
            <person name="Akimov V."/>
            <person name="Henningsen J."/>
            <person name="Johansen P.T."/>
            <person name="Kratchmarova I."/>
            <person name="Kassem M."/>
            <person name="Mann M."/>
            <person name="Olsen J.V."/>
            <person name="Blagoev B."/>
        </authorList>
    </citation>
    <scope>PHOSPHORYLATION [LARGE SCALE ANALYSIS] AT SER-75</scope>
    <scope>IDENTIFICATION BY MASS SPECTROMETRY [LARGE SCALE ANALYSIS]</scope>
</reference>
<reference key="17">
    <citation type="journal article" date="2013" name="J. Proteome Res.">
        <title>Toward a comprehensive characterization of a human cancer cell phosphoproteome.</title>
        <authorList>
            <person name="Zhou H."/>
            <person name="Di Palma S."/>
            <person name="Preisinger C."/>
            <person name="Peng M."/>
            <person name="Polat A.N."/>
            <person name="Heck A.J."/>
            <person name="Mohammed S."/>
        </authorList>
    </citation>
    <scope>PHOSPHORYLATION [LARGE SCALE ANALYSIS] AT SER-75; SER-77; THR-153 AND SER-1313</scope>
    <scope>IDENTIFICATION BY MASS SPECTROMETRY [LARGE SCALE ANALYSIS]</scope>
    <source>
        <tissue>Cervix carcinoma</tissue>
        <tissue>Erythroleukemia</tissue>
    </source>
</reference>
<reference key="18">
    <citation type="journal article" date="2014" name="J. Proteomics">
        <title>An enzyme assisted RP-RPLC approach for in-depth analysis of human liver phosphoproteome.</title>
        <authorList>
            <person name="Bian Y."/>
            <person name="Song C."/>
            <person name="Cheng K."/>
            <person name="Dong M."/>
            <person name="Wang F."/>
            <person name="Huang J."/>
            <person name="Sun D."/>
            <person name="Wang L."/>
            <person name="Ye M."/>
            <person name="Zou H."/>
        </authorList>
    </citation>
    <scope>PHOSPHORYLATION [LARGE SCALE ANALYSIS] AT SER-1084</scope>
    <scope>IDENTIFICATION BY MASS SPECTROMETRY [LARGE SCALE ANALYSIS]</scope>
    <source>
        <tissue>Liver</tissue>
    </source>
</reference>
<reference key="19">
    <citation type="journal article" date="2015" name="Cell">
        <title>A single kinase generates the majority of the secreted phosphoproteome.</title>
        <authorList>
            <person name="Tagliabracci V.S."/>
            <person name="Wiley S.E."/>
            <person name="Guo X."/>
            <person name="Kinch L.N."/>
            <person name="Durrant E."/>
            <person name="Wen J."/>
            <person name="Xiao J."/>
            <person name="Cui J."/>
            <person name="Nguyen K.B."/>
            <person name="Engel J.L."/>
            <person name="Coon J.J."/>
            <person name="Grishin N."/>
            <person name="Pinna L.A."/>
            <person name="Pagliarini D.J."/>
            <person name="Dixon J.E."/>
        </authorList>
    </citation>
    <scope>PHOSPHORYLATION AT SER-75</scope>
</reference>
<reference key="20">
    <citation type="journal article" date="2015" name="Proteomics">
        <title>N-terminome analysis of the human mitochondrial proteome.</title>
        <authorList>
            <person name="Vaca Jacome A.S."/>
            <person name="Rabilloud T."/>
            <person name="Schaeffer-Reiss C."/>
            <person name="Rompais M."/>
            <person name="Ayoub D."/>
            <person name="Lane L."/>
            <person name="Bairoch A."/>
            <person name="Van Dorsselaer A."/>
            <person name="Carapito C."/>
        </authorList>
    </citation>
    <scope>IDENTIFICATION BY MASS SPECTROMETRY [LARGE SCALE ANALYSIS]</scope>
</reference>
<reference key="21">
    <citation type="journal article" date="2006" name="Science">
        <title>The consensus coding sequences of human breast and colorectal cancers.</title>
        <authorList>
            <person name="Sjoeblom T."/>
            <person name="Jones S."/>
            <person name="Wood L.D."/>
            <person name="Parsons D.W."/>
            <person name="Lin J."/>
            <person name="Barber T.D."/>
            <person name="Mandelker D."/>
            <person name="Leary R.J."/>
            <person name="Ptak J."/>
            <person name="Silliman N."/>
            <person name="Szabo S."/>
            <person name="Buckhaults P."/>
            <person name="Farrell C."/>
            <person name="Meeh P."/>
            <person name="Markowitz S.D."/>
            <person name="Willis J."/>
            <person name="Dawson D."/>
            <person name="Willson J.K.V."/>
            <person name="Gazdar A.F."/>
            <person name="Hartigan J."/>
            <person name="Wu L."/>
            <person name="Liu C."/>
            <person name="Parmigiani G."/>
            <person name="Park B.H."/>
            <person name="Bachman K.E."/>
            <person name="Papadopoulos N."/>
            <person name="Vogelstein B."/>
            <person name="Kinzler K.W."/>
            <person name="Velculescu V.E."/>
        </authorList>
    </citation>
    <scope>VARIANTS [LARGE SCALE ANALYSIS] ARG-226 AND PRO-1316</scope>
</reference>
<reference key="22">
    <citation type="journal article" date="2017" name="J. Am. Soc. Nephrol.">
        <title>MAGI2 mutations cause congenital nephrotic syndrome.</title>
        <authorList>
            <consortium name="NephroS"/>
            <consortium name="UK study of Nephrotic Syndrome"/>
            <person name="Bierzynska A."/>
            <person name="Soderquest K."/>
            <person name="Dean P."/>
            <person name="Colby E."/>
            <person name="Rollason R."/>
            <person name="Jones C."/>
            <person name="Inward C.D."/>
            <person name="McCarthy H.J."/>
            <person name="Simpson M.A."/>
            <person name="Lord G.M."/>
            <person name="Williams M."/>
            <person name="Welsh G.I."/>
            <person name="Koziell A.B."/>
            <person name="Saleem M.A."/>
        </authorList>
    </citation>
    <scope>VARIANT MET-1233</scope>
</reference>
<accession>Q86UP2</accession>
<accession>B4DZ88</accession>
<accession>Q13999</accession>
<accession>Q14707</accession>
<accession>Q15387</accession>
<accession>Q17RZ5</accession>
<accession>Q5GGW3</accession>
<accession>Q86W57</accession>
<feature type="chain" id="PRO_0000084337" description="Kinectin">
    <location>
        <begin position="1"/>
        <end position="1357"/>
    </location>
</feature>
<feature type="topological domain" description="Cytoplasmic" evidence="2">
    <location>
        <begin position="1"/>
        <end position="6"/>
    </location>
</feature>
<feature type="transmembrane region" description="Helical; Signal-anchor for type II membrane protein" evidence="2">
    <location>
        <begin position="7"/>
        <end position="29"/>
    </location>
</feature>
<feature type="topological domain" description="Lumenal" evidence="2">
    <location>
        <begin position="30"/>
        <end position="1357"/>
    </location>
</feature>
<feature type="region of interest" description="Disordered" evidence="3">
    <location>
        <begin position="48"/>
        <end position="81"/>
    </location>
</feature>
<feature type="region of interest" description="Disordered" evidence="3">
    <location>
        <begin position="103"/>
        <end position="218"/>
    </location>
</feature>
<feature type="coiled-coil region" evidence="2">
    <location>
        <begin position="330"/>
        <end position="1356"/>
    </location>
</feature>
<feature type="compositionally biased region" description="Basic and acidic residues" evidence="3">
    <location>
        <begin position="121"/>
        <end position="135"/>
    </location>
</feature>
<feature type="compositionally biased region" description="Basic residues" evidence="3">
    <location>
        <begin position="161"/>
        <end position="171"/>
    </location>
</feature>
<feature type="compositionally biased region" description="Basic and acidic residues" evidence="3">
    <location>
        <begin position="172"/>
        <end position="182"/>
    </location>
</feature>
<feature type="modified residue" description="Phosphoserine; by FAM20C" evidence="5 13 14 15 16">
    <location>
        <position position="75"/>
    </location>
</feature>
<feature type="modified residue" description="Phosphoserine" evidence="16">
    <location>
        <position position="77"/>
    </location>
</feature>
<feature type="modified residue" description="Phosphothreonine" evidence="12 13 14 16">
    <location>
        <position position="153"/>
    </location>
</feature>
<feature type="modified residue" description="Phosphoserine" evidence="13">
    <location>
        <position position="156"/>
    </location>
</feature>
<feature type="modified residue" description="Phosphoserine" evidence="17">
    <location>
        <position position="1084"/>
    </location>
</feature>
<feature type="modified residue" description="Phosphoserine" evidence="16">
    <location>
        <position position="1313"/>
    </location>
</feature>
<feature type="glycosylation site" description="N-linked (GlcNAc...) asparagine" evidence="2">
    <location>
        <position position="172"/>
    </location>
</feature>
<feature type="glycosylation site" description="N-linked (GlcNAc...) asparagine" evidence="2">
    <location>
        <position position="435"/>
    </location>
</feature>
<feature type="glycosylation site" description="N-linked (GlcNAc...) asparagine" evidence="2">
    <location>
        <position position="772"/>
    </location>
</feature>
<feature type="glycosylation site" description="N-linked (GlcNAc...) asparagine" evidence="2">
    <location>
        <position position="904"/>
    </location>
</feature>
<feature type="glycosylation site" description="N-linked (GlcNAc...) asparagine" evidence="2">
    <location>
        <position position="1055"/>
    </location>
</feature>
<feature type="glycosylation site" description="N-linked (GlcNAc...) asparagine" evidence="2">
    <location>
        <position position="1088"/>
    </location>
</feature>
<feature type="glycosylation site" description="N-linked (GlcNAc...) asparagine" evidence="2">
    <location>
        <position position="1263"/>
    </location>
</feature>
<feature type="glycosylation site" description="N-linked (GlcNAc...) asparagine" evidence="2">
    <location>
        <position position="1329"/>
    </location>
</feature>
<feature type="splice variant" id="VSP_043207" description="In isoform 3." evidence="8">
    <location>
        <begin position="832"/>
        <end position="854"/>
    </location>
</feature>
<feature type="splice variant" id="VSP_007981" description="In isoform 2." evidence="9 10">
    <location>
        <begin position="1031"/>
        <end position="1059"/>
    </location>
</feature>
<feature type="splice variant" id="VSP_007982" description="In isoform 2, isoform 3 and isoform 4." evidence="7 8 9 10">
    <location>
        <begin position="1232"/>
        <end position="1259"/>
    </location>
</feature>
<feature type="sequence variant" id="VAR_035931" description="In a breast cancer sample; somatic mutation." evidence="4">
    <original>P</original>
    <variation>R</variation>
    <location>
        <position position="226"/>
    </location>
</feature>
<feature type="sequence variant" id="VAR_016206" description="In dbSNP:rs2274073.">
    <original>V</original>
    <variation>M</variation>
    <location>
        <position position="282"/>
    </location>
</feature>
<feature type="sequence variant" id="VAR_079266" description="In dbSNP:rs372815686." evidence="6">
    <original>L</original>
    <variation>M</variation>
    <location>
        <position position="1233"/>
    </location>
</feature>
<feature type="sequence variant" id="VAR_035932" description="In a breast cancer sample; somatic mutation." evidence="4">
    <original>T</original>
    <variation>P</variation>
    <location>
        <position position="1316"/>
    </location>
</feature>
<feature type="sequence conflict" description="In Ref. 4; BAA02794." evidence="11" ref="4">
    <original>S</original>
    <variation>P</variation>
    <location>
        <position position="15"/>
    </location>
</feature>
<feature type="sequence conflict" description="In Ref. 1; CAA80271." evidence="11" ref="1">
    <location>
        <position position="210"/>
    </location>
</feature>
<feature type="sequence conflict" description="In Ref. 1; CAA80271." evidence="11" ref="1">
    <original>I</original>
    <variation>M</variation>
    <location>
        <position position="373"/>
    </location>
</feature>
<feature type="sequence conflict" description="In Ref. 1; CAA80271." evidence="11" ref="1">
    <original>E</original>
    <variation>G</variation>
    <location>
        <position position="939"/>
    </location>
</feature>
<protein>
    <recommendedName>
        <fullName>Kinectin</fullName>
    </recommendedName>
    <alternativeName>
        <fullName>CG-1 antigen</fullName>
    </alternativeName>
    <alternativeName>
        <fullName>Kinesin receptor</fullName>
    </alternativeName>
</protein>
<name>KTN1_HUMAN</name>
<dbReference type="EMBL" id="Z22551">
    <property type="protein sequence ID" value="CAA80271.1"/>
    <property type="molecule type" value="mRNA"/>
</dbReference>
<dbReference type="EMBL" id="L25616">
    <property type="protein sequence ID" value="AAB65853.1"/>
    <property type="molecule type" value="mRNA"/>
</dbReference>
<dbReference type="EMBL" id="AY264265">
    <property type="protein sequence ID" value="AAP20418.1"/>
    <property type="molecule type" value="mRNA"/>
</dbReference>
<dbReference type="EMBL" id="D13629">
    <property type="protein sequence ID" value="BAA02794.2"/>
    <property type="status" value="ALT_INIT"/>
    <property type="molecule type" value="mRNA"/>
</dbReference>
<dbReference type="EMBL" id="AK302797">
    <property type="protein sequence ID" value="BAG64000.1"/>
    <property type="molecule type" value="mRNA"/>
</dbReference>
<dbReference type="EMBL" id="AL138499">
    <property type="status" value="NOT_ANNOTATED_CDS"/>
    <property type="molecule type" value="Genomic_DNA"/>
</dbReference>
<dbReference type="EMBL" id="AL355773">
    <property type="status" value="NOT_ANNOTATED_CDS"/>
    <property type="molecule type" value="Genomic_DNA"/>
</dbReference>
<dbReference type="EMBL" id="BC050555">
    <property type="protein sequence ID" value="AAH50555.1"/>
    <property type="status" value="ALT_SEQ"/>
    <property type="molecule type" value="mRNA"/>
</dbReference>
<dbReference type="EMBL" id="BC112337">
    <property type="protein sequence ID" value="AAI12338.1"/>
    <property type="molecule type" value="mRNA"/>
</dbReference>
<dbReference type="EMBL" id="BC117132">
    <property type="protein sequence ID" value="AAI17133.1"/>
    <property type="molecule type" value="mRNA"/>
</dbReference>
<dbReference type="EMBL" id="BC143720">
    <property type="protein sequence ID" value="AAI43721.1"/>
    <property type="molecule type" value="mRNA"/>
</dbReference>
<dbReference type="EMBL" id="AY536375">
    <property type="protein sequence ID" value="AAT66048.1"/>
    <property type="molecule type" value="mRNA"/>
</dbReference>
<dbReference type="CCDS" id="CCDS41957.1">
    <molecule id="Q86UP2-1"/>
</dbReference>
<dbReference type="CCDS" id="CCDS41958.1">
    <molecule id="Q86UP2-2"/>
</dbReference>
<dbReference type="CCDS" id="CCDS41959.1">
    <molecule id="Q86UP2-3"/>
</dbReference>
<dbReference type="PIR" id="I53799">
    <property type="entry name" value="I53799"/>
</dbReference>
<dbReference type="PIR" id="S32763">
    <property type="entry name" value="S32763"/>
</dbReference>
<dbReference type="RefSeq" id="NP_001072989.1">
    <molecule id="Q86UP2-1"/>
    <property type="nucleotide sequence ID" value="NM_001079521.2"/>
</dbReference>
<dbReference type="RefSeq" id="NP_001072990.1">
    <molecule id="Q86UP2-3"/>
    <property type="nucleotide sequence ID" value="NM_001079522.2"/>
</dbReference>
<dbReference type="RefSeq" id="NP_001257943.1">
    <molecule id="Q86UP2-4"/>
    <property type="nucleotide sequence ID" value="NM_001271014.2"/>
</dbReference>
<dbReference type="RefSeq" id="NP_001389611.1">
    <molecule id="Q86UP2-1"/>
    <property type="nucleotide sequence ID" value="NM_001402682.1"/>
</dbReference>
<dbReference type="RefSeq" id="NP_001389614.1">
    <molecule id="Q86UP2-4"/>
    <property type="nucleotide sequence ID" value="NM_001402685.1"/>
</dbReference>
<dbReference type="RefSeq" id="NP_001389615.1">
    <molecule id="Q86UP2-4"/>
    <property type="nucleotide sequence ID" value="NM_001402686.1"/>
</dbReference>
<dbReference type="RefSeq" id="NP_001389620.1">
    <molecule id="Q86UP2-3"/>
    <property type="nucleotide sequence ID" value="NM_001402691.1"/>
</dbReference>
<dbReference type="RefSeq" id="NP_001389622.1">
    <molecule id="Q86UP2-2"/>
    <property type="nucleotide sequence ID" value="NM_001402693.1"/>
</dbReference>
<dbReference type="RefSeq" id="NP_001389623.1">
    <molecule id="Q86UP2-2"/>
    <property type="nucleotide sequence ID" value="NM_001402694.1"/>
</dbReference>
<dbReference type="RefSeq" id="NP_004977.2">
    <molecule id="Q86UP2-2"/>
    <property type="nucleotide sequence ID" value="NM_004986.3"/>
</dbReference>
<dbReference type="RefSeq" id="XP_006720201.1">
    <property type="nucleotide sequence ID" value="XM_006720138.2"/>
</dbReference>
<dbReference type="RefSeq" id="XP_006720202.1">
    <property type="nucleotide sequence ID" value="XM_006720139.2"/>
</dbReference>
<dbReference type="RefSeq" id="XP_011535053.1">
    <property type="nucleotide sequence ID" value="XM_011536751.2"/>
</dbReference>
<dbReference type="RefSeq" id="XP_011535055.1">
    <property type="nucleotide sequence ID" value="XM_011536753.1"/>
</dbReference>
<dbReference type="RefSeq" id="XP_016876767.1">
    <property type="nucleotide sequence ID" value="XM_017021278.1"/>
</dbReference>
<dbReference type="RefSeq" id="XP_016876771.1">
    <property type="nucleotide sequence ID" value="XM_017021282.1"/>
</dbReference>
<dbReference type="RefSeq" id="XP_016876772.1">
    <property type="nucleotide sequence ID" value="XM_017021283.1"/>
</dbReference>
<dbReference type="RefSeq" id="XP_054232004.1">
    <molecule id="Q86UP2-1"/>
    <property type="nucleotide sequence ID" value="XM_054376029.1"/>
</dbReference>
<dbReference type="RefSeq" id="XP_054232005.1">
    <molecule id="Q86UP2-1"/>
    <property type="nucleotide sequence ID" value="XM_054376030.1"/>
</dbReference>
<dbReference type="RefSeq" id="XP_054232006.1">
    <molecule id="Q86UP2-1"/>
    <property type="nucleotide sequence ID" value="XM_054376031.1"/>
</dbReference>
<dbReference type="RefSeq" id="XP_054232007.1">
    <molecule id="Q86UP2-4"/>
    <property type="nucleotide sequence ID" value="XM_054376032.1"/>
</dbReference>
<dbReference type="RefSeq" id="XP_054232008.1">
    <molecule id="Q86UP2-4"/>
    <property type="nucleotide sequence ID" value="XM_054376033.1"/>
</dbReference>
<dbReference type="RefSeq" id="XP_054232009.1">
    <molecule id="Q86UP2-4"/>
    <property type="nucleotide sequence ID" value="XM_054376034.1"/>
</dbReference>
<dbReference type="RefSeq" id="XP_054232012.1">
    <molecule id="Q86UP2-2"/>
    <property type="nucleotide sequence ID" value="XM_054376037.1"/>
</dbReference>
<dbReference type="SMR" id="Q86UP2"/>
<dbReference type="BioGRID" id="110092">
    <property type="interactions" value="341"/>
</dbReference>
<dbReference type="CORUM" id="Q86UP2"/>
<dbReference type="DIP" id="DIP-27585N"/>
<dbReference type="FunCoup" id="Q86UP2">
    <property type="interactions" value="1806"/>
</dbReference>
<dbReference type="IntAct" id="Q86UP2">
    <property type="interactions" value="164"/>
</dbReference>
<dbReference type="MINT" id="Q86UP2"/>
<dbReference type="STRING" id="9606.ENSP00000378725"/>
<dbReference type="GlyCosmos" id="Q86UP2">
    <property type="glycosylation" value="8 sites, No reported glycans"/>
</dbReference>
<dbReference type="GlyGen" id="Q86UP2">
    <property type="glycosylation" value="12 sites, 5 N-linked glycans (2 sites), 1 O-linked glycan (4 sites)"/>
</dbReference>
<dbReference type="iPTMnet" id="Q86UP2"/>
<dbReference type="MetOSite" id="Q86UP2"/>
<dbReference type="PhosphoSitePlus" id="Q86UP2"/>
<dbReference type="SwissPalm" id="Q86UP2"/>
<dbReference type="BioMuta" id="KTN1"/>
<dbReference type="DMDM" id="34098465"/>
<dbReference type="jPOST" id="Q86UP2"/>
<dbReference type="MassIVE" id="Q86UP2"/>
<dbReference type="PaxDb" id="9606-ENSP00000378725"/>
<dbReference type="PeptideAtlas" id="Q86UP2"/>
<dbReference type="ProteomicsDB" id="69841">
    <molecule id="Q86UP2-1"/>
</dbReference>
<dbReference type="ProteomicsDB" id="69842">
    <molecule id="Q86UP2-2"/>
</dbReference>
<dbReference type="ProteomicsDB" id="69843">
    <molecule id="Q86UP2-3"/>
</dbReference>
<dbReference type="Pumba" id="Q86UP2"/>
<dbReference type="Antibodypedia" id="127">
    <property type="antibodies" value="187 antibodies from 26 providers"/>
</dbReference>
<dbReference type="DNASU" id="3895"/>
<dbReference type="Ensembl" id="ENST00000395308.5">
    <molecule id="Q86UP2-3"/>
    <property type="protein sequence ID" value="ENSP00000378719.1"/>
    <property type="gene ID" value="ENSG00000126777.18"/>
</dbReference>
<dbReference type="Ensembl" id="ENST00000395309.7">
    <molecule id="Q86UP2-3"/>
    <property type="protein sequence ID" value="ENSP00000378720.4"/>
    <property type="gene ID" value="ENSG00000126777.18"/>
</dbReference>
<dbReference type="Ensembl" id="ENST00000395311.5">
    <molecule id="Q86UP2-3"/>
    <property type="protein sequence ID" value="ENSP00000378722.1"/>
    <property type="gene ID" value="ENSG00000126777.18"/>
</dbReference>
<dbReference type="Ensembl" id="ENST00000395314.8">
    <molecule id="Q86UP2-1"/>
    <property type="protein sequence ID" value="ENSP00000378725.3"/>
    <property type="gene ID" value="ENSG00000126777.18"/>
</dbReference>
<dbReference type="Ensembl" id="ENST00000413890.6">
    <molecule id="Q86UP2-3"/>
    <property type="protein sequence ID" value="ENSP00000394992.2"/>
    <property type="gene ID" value="ENSG00000126777.18"/>
</dbReference>
<dbReference type="Ensembl" id="ENST00000438792.6">
    <molecule id="Q86UP2-2"/>
    <property type="protein sequence ID" value="ENSP00000391964.2"/>
    <property type="gene ID" value="ENSG00000126777.18"/>
</dbReference>
<dbReference type="Ensembl" id="ENST00000459737.5">
    <molecule id="Q86UP2-1"/>
    <property type="protein sequence ID" value="ENSP00000432149.1"/>
    <property type="gene ID" value="ENSG00000126777.18"/>
</dbReference>
<dbReference type="GeneID" id="3895"/>
<dbReference type="KEGG" id="hsa:3895"/>
<dbReference type="MANE-Select" id="ENST00000395314.8">
    <property type="protein sequence ID" value="ENSP00000378725.3"/>
    <property type="RefSeq nucleotide sequence ID" value="NM_001079521.2"/>
    <property type="RefSeq protein sequence ID" value="NP_001072989.1"/>
</dbReference>
<dbReference type="UCSC" id="uc001xcb.4">
    <molecule id="Q86UP2-1"/>
    <property type="organism name" value="human"/>
</dbReference>
<dbReference type="AGR" id="HGNC:6467"/>
<dbReference type="CTD" id="3895"/>
<dbReference type="DisGeNET" id="3895"/>
<dbReference type="GeneCards" id="KTN1"/>
<dbReference type="HGNC" id="HGNC:6467">
    <property type="gene designation" value="KTN1"/>
</dbReference>
<dbReference type="HPA" id="ENSG00000126777">
    <property type="expression patterns" value="Low tissue specificity"/>
</dbReference>
<dbReference type="MIM" id="600381">
    <property type="type" value="gene"/>
</dbReference>
<dbReference type="neXtProt" id="NX_Q86UP2"/>
<dbReference type="OpenTargets" id="ENSG00000126777"/>
<dbReference type="PharmGKB" id="PA30256"/>
<dbReference type="VEuPathDB" id="HostDB:ENSG00000126777"/>
<dbReference type="eggNOG" id="ENOG502QSIW">
    <property type="taxonomic scope" value="Eukaryota"/>
</dbReference>
<dbReference type="GeneTree" id="ENSGT00940000158237"/>
<dbReference type="HOGENOM" id="CLU_005719_0_0_1"/>
<dbReference type="InParanoid" id="Q86UP2"/>
<dbReference type="OMA" id="KECMAET"/>
<dbReference type="OrthoDB" id="5875463at2759"/>
<dbReference type="PAN-GO" id="Q86UP2">
    <property type="GO annotations" value="0 GO annotations based on evolutionary models"/>
</dbReference>
<dbReference type="PhylomeDB" id="Q86UP2"/>
<dbReference type="TreeFam" id="TF333579"/>
<dbReference type="PathwayCommons" id="Q86UP2"/>
<dbReference type="Reactome" id="R-HSA-381426">
    <property type="pathway name" value="Regulation of Insulin-like Growth Factor (IGF) transport and uptake by Insulin-like Growth Factor Binding Proteins (IGFBPs)"/>
</dbReference>
<dbReference type="Reactome" id="R-HSA-5625970">
    <property type="pathway name" value="RHO GTPases activate KTN1"/>
</dbReference>
<dbReference type="Reactome" id="R-HSA-8957275">
    <property type="pathway name" value="Post-translational protein phosphorylation"/>
</dbReference>
<dbReference type="Reactome" id="R-HSA-8980692">
    <property type="pathway name" value="RHOA GTPase cycle"/>
</dbReference>
<dbReference type="Reactome" id="R-HSA-9013148">
    <property type="pathway name" value="CDC42 GTPase cycle"/>
</dbReference>
<dbReference type="Reactome" id="R-HSA-9013149">
    <property type="pathway name" value="RAC1 GTPase cycle"/>
</dbReference>
<dbReference type="Reactome" id="R-HSA-9013408">
    <property type="pathway name" value="RHOG GTPase cycle"/>
</dbReference>
<dbReference type="Reactome" id="R-HSA-9696264">
    <property type="pathway name" value="RND3 GTPase cycle"/>
</dbReference>
<dbReference type="Reactome" id="R-HSA-9696270">
    <property type="pathway name" value="RND2 GTPase cycle"/>
</dbReference>
<dbReference type="SignaLink" id="Q86UP2"/>
<dbReference type="SIGNOR" id="Q86UP2"/>
<dbReference type="BioGRID-ORCS" id="3895">
    <property type="hits" value="16 hits in 1158 CRISPR screens"/>
</dbReference>
<dbReference type="CD-CODE" id="FB4E32DD">
    <property type="entry name" value="Presynaptic clusters and postsynaptic densities"/>
</dbReference>
<dbReference type="ChiTaRS" id="KTN1">
    <property type="organism name" value="human"/>
</dbReference>
<dbReference type="GeneWiki" id="KTN1"/>
<dbReference type="GenomeRNAi" id="3895"/>
<dbReference type="Pharos" id="Q86UP2">
    <property type="development level" value="Tbio"/>
</dbReference>
<dbReference type="PRO" id="PR:Q86UP2"/>
<dbReference type="Proteomes" id="UP000005640">
    <property type="component" value="Chromosome 14"/>
</dbReference>
<dbReference type="RNAct" id="Q86UP2">
    <property type="molecule type" value="protein"/>
</dbReference>
<dbReference type="Bgee" id="ENSG00000126777">
    <property type="expression patterns" value="Expressed in sperm and 212 other cell types or tissues"/>
</dbReference>
<dbReference type="ExpressionAtlas" id="Q86UP2">
    <property type="expression patterns" value="baseline and differential"/>
</dbReference>
<dbReference type="GO" id="GO:0005783">
    <property type="term" value="C:endoplasmic reticulum"/>
    <property type="evidence" value="ECO:0000314"/>
    <property type="project" value="HPA"/>
</dbReference>
<dbReference type="GO" id="GO:0005788">
    <property type="term" value="C:endoplasmic reticulum lumen"/>
    <property type="evidence" value="ECO:0000304"/>
    <property type="project" value="Reactome"/>
</dbReference>
<dbReference type="GO" id="GO:0005789">
    <property type="term" value="C:endoplasmic reticulum membrane"/>
    <property type="evidence" value="ECO:0000304"/>
    <property type="project" value="Reactome"/>
</dbReference>
<dbReference type="GO" id="GO:0016020">
    <property type="term" value="C:membrane"/>
    <property type="evidence" value="ECO:0007005"/>
    <property type="project" value="UniProtKB"/>
</dbReference>
<dbReference type="GO" id="GO:0005886">
    <property type="term" value="C:plasma membrane"/>
    <property type="evidence" value="ECO:0000304"/>
    <property type="project" value="ProtInc"/>
</dbReference>
<dbReference type="GO" id="GO:0045296">
    <property type="term" value="F:cadherin binding"/>
    <property type="evidence" value="ECO:0007005"/>
    <property type="project" value="BHF-UCL"/>
</dbReference>
<dbReference type="GO" id="GO:0019894">
    <property type="term" value="F:kinesin binding"/>
    <property type="evidence" value="ECO:0007669"/>
    <property type="project" value="InterPro"/>
</dbReference>
<dbReference type="GO" id="GO:0003723">
    <property type="term" value="F:RNA binding"/>
    <property type="evidence" value="ECO:0007005"/>
    <property type="project" value="UniProtKB"/>
</dbReference>
<dbReference type="GO" id="GO:0007018">
    <property type="term" value="P:microtubule-based movement"/>
    <property type="evidence" value="ECO:0000303"/>
    <property type="project" value="ProtInc"/>
</dbReference>
<dbReference type="GO" id="GO:0015031">
    <property type="term" value="P:protein transport"/>
    <property type="evidence" value="ECO:0007669"/>
    <property type="project" value="InterPro"/>
</dbReference>
<dbReference type="InterPro" id="IPR024854">
    <property type="entry name" value="Kinectin"/>
</dbReference>
<dbReference type="InterPro" id="IPR007794">
    <property type="entry name" value="Rib_rcpt_KP"/>
</dbReference>
<dbReference type="PANTHER" id="PTHR18864">
    <property type="entry name" value="KINECTIN"/>
    <property type="match status" value="1"/>
</dbReference>
<dbReference type="PANTHER" id="PTHR18864:SF1">
    <property type="entry name" value="KINECTIN"/>
    <property type="match status" value="1"/>
</dbReference>
<dbReference type="Pfam" id="PF05104">
    <property type="entry name" value="Rib_recp_KP_reg"/>
    <property type="match status" value="1"/>
</dbReference>
<comment type="function">
    <text>Receptor for kinesin thus involved in kinesin-driven vesicle motility. Accumulates in integrin-based adhesion complexes (IAC) upon integrin aggregation by fibronectin.</text>
</comment>
<comment type="subunit">
    <text evidence="1">Parallel homodimers formed between the membrane-bound and the cytosolic form, and also between 2 cytosolic forms.</text>
</comment>
<comment type="interaction">
    <interactant intactId="EBI-359761">
        <id>Q86UP2</id>
    </interactant>
    <interactant intactId="EBI-749464">
        <id>Q12983</id>
        <label>BNIP3</label>
    </interactant>
    <organismsDiffer>false</organismsDiffer>
    <experiments>3</experiments>
</comment>
<comment type="interaction">
    <interactant intactId="EBI-359761">
        <id>Q86UP2</id>
    </interactant>
    <interactant intactId="EBI-3939278">
        <id>Q9BXN2</id>
        <label>CLEC7A</label>
    </interactant>
    <organismsDiffer>false</organismsDiffer>
    <experiments>3</experiments>
</comment>
<comment type="interaction">
    <interactant intactId="EBI-359761">
        <id>Q86UP2</id>
    </interactant>
    <interactant intactId="EBI-748397">
        <id>P50222</id>
        <label>MEOX2</label>
    </interactant>
    <organismsDiffer>false</organismsDiffer>
    <experiments>3</experiments>
</comment>
<comment type="interaction">
    <interactant intactId="EBI-359761">
        <id>Q86UP2</id>
    </interactant>
    <interactant intactId="EBI-347996">
        <id>O43765</id>
        <label>SGTA</label>
    </interactant>
    <organismsDiffer>false</organismsDiffer>
    <experiments>3</experiments>
</comment>
<comment type="interaction">
    <interactant intactId="EBI-359761">
        <id>Q86UP2</id>
    </interactant>
    <interactant intactId="EBI-7131783">
        <id>Q8N205</id>
        <label>SYNE4</label>
    </interactant>
    <organismsDiffer>false</organismsDiffer>
    <experiments>3</experiments>
</comment>
<comment type="interaction">
    <interactant intactId="EBI-12007212">
        <id>Q86UP2-3</id>
    </interactant>
    <interactant intactId="EBI-749464">
        <id>Q12983</id>
        <label>BNIP3</label>
    </interactant>
    <organismsDiffer>false</organismsDiffer>
    <experiments>3</experiments>
</comment>
<comment type="interaction">
    <interactant intactId="EBI-12007212">
        <id>Q86UP2-3</id>
    </interactant>
    <interactant intactId="EBI-3862428">
        <id>P09693</id>
        <label>CD3G</label>
    </interactant>
    <organismsDiffer>false</organismsDiffer>
    <experiments>3</experiments>
</comment>
<comment type="interaction">
    <interactant intactId="EBI-12007212">
        <id>Q86UP2-3</id>
    </interactant>
    <interactant intactId="EBI-2826276">
        <id>P34810</id>
        <label>CD68</label>
    </interactant>
    <organismsDiffer>false</organismsDiffer>
    <experiments>3</experiments>
</comment>
<comment type="interaction">
    <interactant intactId="EBI-12007212">
        <id>Q86UP2-3</id>
    </interactant>
    <interactant intactId="EBI-12913226">
        <id>Q8WTT0</id>
        <label>CLEC4C</label>
    </interactant>
    <organismsDiffer>false</organismsDiffer>
    <experiments>3</experiments>
</comment>
<comment type="interaction">
    <interactant intactId="EBI-12007212">
        <id>Q86UP2-3</id>
    </interactant>
    <interactant intactId="EBI-2833872">
        <id>O15552</id>
        <label>FFAR2</label>
    </interactant>
    <organismsDiffer>false</organismsDiffer>
    <experiments>3</experiments>
</comment>
<comment type="interaction">
    <interactant intactId="EBI-12007212">
        <id>Q86UP2-3</id>
    </interactant>
    <interactant intactId="EBI-8632435">
        <id>P43628</id>
        <label>KIR2DL3</label>
    </interactant>
    <organismsDiffer>false</organismsDiffer>
    <experiments>3</experiments>
</comment>
<comment type="interaction">
    <interactant intactId="EBI-12007212">
        <id>Q86UP2-3</id>
    </interactant>
    <interactant intactId="EBI-2820517">
        <id>Q8TAF8</id>
        <label>LHFPL5</label>
    </interactant>
    <organismsDiffer>false</organismsDiffer>
    <experiments>3</experiments>
</comment>
<comment type="interaction">
    <interactant intactId="EBI-12007212">
        <id>Q86UP2-3</id>
    </interactant>
    <interactant intactId="EBI-2907262">
        <id>P20645</id>
        <label>M6PR</label>
    </interactant>
    <organismsDiffer>false</organismsDiffer>
    <experiments>3</experiments>
</comment>
<comment type="interaction">
    <interactant intactId="EBI-12007212">
        <id>Q86UP2-3</id>
    </interactant>
    <interactant intactId="EBI-373355">
        <id>Q5SR56</id>
        <label>MFSD14B</label>
    </interactant>
    <organismsDiffer>false</organismsDiffer>
    <experiments>3</experiments>
</comment>
<comment type="interaction">
    <interactant intactId="EBI-12007212">
        <id>Q86UP2-3</id>
    </interactant>
    <interactant intactId="EBI-16427978">
        <id>Q9BQ51</id>
        <label>PDCD1LG2</label>
    </interactant>
    <organismsDiffer>false</organismsDiffer>
    <experiments>3</experiments>
</comment>
<comment type="interaction">
    <interactant intactId="EBI-12007212">
        <id>Q86UP2-3</id>
    </interactant>
    <interactant intactId="EBI-347996">
        <id>O43765</id>
        <label>SGTA</label>
    </interactant>
    <organismsDiffer>false</organismsDiffer>
    <experiments>3</experiments>
</comment>
<comment type="interaction">
    <interactant intactId="EBI-12007212">
        <id>Q86UP2-3</id>
    </interactant>
    <interactant intactId="EBI-1211440">
        <id>P27105</id>
        <label>STOM</label>
    </interactant>
    <organismsDiffer>false</organismsDiffer>
    <experiments>3</experiments>
</comment>
<comment type="interaction">
    <interactant intactId="EBI-12007212">
        <id>Q86UP2-3</id>
    </interactant>
    <interactant intactId="EBI-18194029">
        <id>Q96L08</id>
        <label>SUSD3</label>
    </interactant>
    <organismsDiffer>false</organismsDiffer>
    <experiments>3</experiments>
</comment>
<comment type="interaction">
    <interactant intactId="EBI-12007212">
        <id>Q86UP2-3</id>
    </interactant>
    <interactant intactId="EBI-10273251">
        <id>Q8TBG9</id>
        <label>SYNPR</label>
    </interactant>
    <organismsDiffer>false</organismsDiffer>
    <experiments>3</experiments>
</comment>
<comment type="interaction">
    <interactant intactId="EBI-12007212">
        <id>Q86UP2-3</id>
    </interactant>
    <interactant intactId="EBI-11724423">
        <id>Q7Z7N9</id>
        <label>TMEM179B</label>
    </interactant>
    <organismsDiffer>false</organismsDiffer>
    <experiments>3</experiments>
</comment>
<comment type="subcellular location">
    <subcellularLocation>
        <location>Endoplasmic reticulum membrane</location>
        <topology>Single-pass type II membrane protein</topology>
    </subcellularLocation>
    <text>Vesicle membrane protein anchored to the endoplasmic reticulum.</text>
</comment>
<comment type="alternative products">
    <event type="alternative splicing"/>
    <isoform>
        <id>Q86UP2-1</id>
        <name>1</name>
        <sequence type="displayed"/>
    </isoform>
    <isoform>
        <id>Q86UP2-2</id>
        <name>2</name>
        <sequence type="described" ref="VSP_007981 VSP_007982"/>
    </isoform>
    <isoform>
        <id>Q86UP2-3</id>
        <name>3</name>
        <sequence type="described" ref="VSP_043207 VSP_007982"/>
    </isoform>
    <isoform>
        <id>Q86UP2-4</id>
        <name>4</name>
        <sequence type="described" ref="VSP_007982"/>
    </isoform>
    <text>Additional isoforms seem to exist.</text>
</comment>
<comment type="tissue specificity">
    <text>High levels in peripheral blood lymphocytes, testis and ovary, lower levels in spleen, thymus, prostate, small intestine and colon.</text>
</comment>
<comment type="similarity">
    <text evidence="11">Belongs to the kinectin family.</text>
</comment>
<comment type="sequence caution" evidence="11">
    <conflict type="miscellaneous discrepancy">
        <sequence resource="EMBL-CDS" id="AAH50555"/>
    </conflict>
    <text>Contaminating sequence. Potential poly-A sequence.</text>
</comment>
<comment type="sequence caution" evidence="11">
    <conflict type="erroneous initiation">
        <sequence resource="EMBL-CDS" id="BAA02794"/>
    </conflict>
    <text>Extended N-terminus.</text>
</comment>